<accession>Q55BA0</accession>
<reference key="1">
    <citation type="journal article" date="2002" name="Nature">
        <title>Sequence and analysis of chromosome 2 of Dictyostelium discoideum.</title>
        <authorList>
            <person name="Gloeckner G."/>
            <person name="Eichinger L."/>
            <person name="Szafranski K."/>
            <person name="Pachebat J.A."/>
            <person name="Bankier A.T."/>
            <person name="Dear P.H."/>
            <person name="Lehmann R."/>
            <person name="Baumgart C."/>
            <person name="Parra G."/>
            <person name="Abril J.F."/>
            <person name="Guigo R."/>
            <person name="Kumpf K."/>
            <person name="Tunggal B."/>
            <person name="Cox E.C."/>
            <person name="Quail M.A."/>
            <person name="Platzer M."/>
            <person name="Rosenthal A."/>
            <person name="Noegel A.A."/>
        </authorList>
    </citation>
    <scope>NUCLEOTIDE SEQUENCE [LARGE SCALE GENOMIC DNA]</scope>
    <source>
        <strain>AX4</strain>
    </source>
</reference>
<reference key="2">
    <citation type="journal article" date="2005" name="Nature">
        <title>The genome of the social amoeba Dictyostelium discoideum.</title>
        <authorList>
            <person name="Eichinger L."/>
            <person name="Pachebat J.A."/>
            <person name="Gloeckner G."/>
            <person name="Rajandream M.A."/>
            <person name="Sucgang R."/>
            <person name="Berriman M."/>
            <person name="Song J."/>
            <person name="Olsen R."/>
            <person name="Szafranski K."/>
            <person name="Xu Q."/>
            <person name="Tunggal B."/>
            <person name="Kummerfeld S."/>
            <person name="Madera M."/>
            <person name="Konfortov B.A."/>
            <person name="Rivero F."/>
            <person name="Bankier A.T."/>
            <person name="Lehmann R."/>
            <person name="Hamlin N."/>
            <person name="Davies R."/>
            <person name="Gaudet P."/>
            <person name="Fey P."/>
            <person name="Pilcher K."/>
            <person name="Chen G."/>
            <person name="Saunders D."/>
            <person name="Sodergren E.J."/>
            <person name="Davis P."/>
            <person name="Kerhornou A."/>
            <person name="Nie X."/>
            <person name="Hall N."/>
            <person name="Anjard C."/>
            <person name="Hemphill L."/>
            <person name="Bason N."/>
            <person name="Farbrother P."/>
            <person name="Desany B."/>
            <person name="Just E."/>
            <person name="Morio T."/>
            <person name="Rost R."/>
            <person name="Churcher C.M."/>
            <person name="Cooper J."/>
            <person name="Haydock S."/>
            <person name="van Driessche N."/>
            <person name="Cronin A."/>
            <person name="Goodhead I."/>
            <person name="Muzny D.M."/>
            <person name="Mourier T."/>
            <person name="Pain A."/>
            <person name="Lu M."/>
            <person name="Harper D."/>
            <person name="Lindsay R."/>
            <person name="Hauser H."/>
            <person name="James K.D."/>
            <person name="Quiles M."/>
            <person name="Madan Babu M."/>
            <person name="Saito T."/>
            <person name="Buchrieser C."/>
            <person name="Wardroper A."/>
            <person name="Felder M."/>
            <person name="Thangavelu M."/>
            <person name="Johnson D."/>
            <person name="Knights A."/>
            <person name="Loulseged H."/>
            <person name="Mungall K.L."/>
            <person name="Oliver K."/>
            <person name="Price C."/>
            <person name="Quail M.A."/>
            <person name="Urushihara H."/>
            <person name="Hernandez J."/>
            <person name="Rabbinowitsch E."/>
            <person name="Steffen D."/>
            <person name="Sanders M."/>
            <person name="Ma J."/>
            <person name="Kohara Y."/>
            <person name="Sharp S."/>
            <person name="Simmonds M.N."/>
            <person name="Spiegler S."/>
            <person name="Tivey A."/>
            <person name="Sugano S."/>
            <person name="White B."/>
            <person name="Walker D."/>
            <person name="Woodward J.R."/>
            <person name="Winckler T."/>
            <person name="Tanaka Y."/>
            <person name="Shaulsky G."/>
            <person name="Schleicher M."/>
            <person name="Weinstock G.M."/>
            <person name="Rosenthal A."/>
            <person name="Cox E.C."/>
            <person name="Chisholm R.L."/>
            <person name="Gibbs R.A."/>
            <person name="Loomis W.F."/>
            <person name="Platzer M."/>
            <person name="Kay R.R."/>
            <person name="Williams J.G."/>
            <person name="Dear P.H."/>
            <person name="Noegel A.A."/>
            <person name="Barrell B.G."/>
            <person name="Kuspa A."/>
        </authorList>
    </citation>
    <scope>NUCLEOTIDE SEQUENCE [LARGE SCALE GENOMIC DNA]</scope>
    <source>
        <strain>AX4</strain>
    </source>
</reference>
<comment type="catalytic activity">
    <reaction>
        <text>L-seryl-[protein] + ATP = O-phospho-L-seryl-[protein] + ADP + H(+)</text>
        <dbReference type="Rhea" id="RHEA:17989"/>
        <dbReference type="Rhea" id="RHEA-COMP:9863"/>
        <dbReference type="Rhea" id="RHEA-COMP:11604"/>
        <dbReference type="ChEBI" id="CHEBI:15378"/>
        <dbReference type="ChEBI" id="CHEBI:29999"/>
        <dbReference type="ChEBI" id="CHEBI:30616"/>
        <dbReference type="ChEBI" id="CHEBI:83421"/>
        <dbReference type="ChEBI" id="CHEBI:456216"/>
        <dbReference type="EC" id="2.7.11.1"/>
    </reaction>
</comment>
<comment type="catalytic activity">
    <reaction>
        <text>L-threonyl-[protein] + ATP = O-phospho-L-threonyl-[protein] + ADP + H(+)</text>
        <dbReference type="Rhea" id="RHEA:46608"/>
        <dbReference type="Rhea" id="RHEA-COMP:11060"/>
        <dbReference type="Rhea" id="RHEA-COMP:11605"/>
        <dbReference type="ChEBI" id="CHEBI:15378"/>
        <dbReference type="ChEBI" id="CHEBI:30013"/>
        <dbReference type="ChEBI" id="CHEBI:30616"/>
        <dbReference type="ChEBI" id="CHEBI:61977"/>
        <dbReference type="ChEBI" id="CHEBI:456216"/>
        <dbReference type="EC" id="2.7.11.1"/>
    </reaction>
</comment>
<comment type="similarity">
    <text evidence="4">Belongs to the protein kinase superfamily. TKL Ser/Thr protein kinase family.</text>
</comment>
<feature type="chain" id="PRO_0000355165" description="Probable serine/threonine-protein kinase DDB_G0271402">
    <location>
        <begin position="1"/>
        <end position="765"/>
    </location>
</feature>
<feature type="domain" description="Protein kinase" evidence="1">
    <location>
        <begin position="35"/>
        <end position="328"/>
    </location>
</feature>
<feature type="region of interest" description="Disordered" evidence="3">
    <location>
        <begin position="371"/>
        <end position="393"/>
    </location>
</feature>
<feature type="region of interest" description="Disordered" evidence="3">
    <location>
        <begin position="443"/>
        <end position="477"/>
    </location>
</feature>
<feature type="region of interest" description="Disordered" evidence="3">
    <location>
        <begin position="491"/>
        <end position="527"/>
    </location>
</feature>
<feature type="region of interest" description="Disordered" evidence="3">
    <location>
        <begin position="545"/>
        <end position="620"/>
    </location>
</feature>
<feature type="region of interest" description="Disordered" evidence="3">
    <location>
        <begin position="654"/>
        <end position="684"/>
    </location>
</feature>
<feature type="region of interest" description="Disordered" evidence="3">
    <location>
        <begin position="699"/>
        <end position="738"/>
    </location>
</feature>
<feature type="region of interest" description="Disordered" evidence="3">
    <location>
        <begin position="746"/>
        <end position="765"/>
    </location>
</feature>
<feature type="compositionally biased region" description="Acidic residues" evidence="3">
    <location>
        <begin position="446"/>
        <end position="458"/>
    </location>
</feature>
<feature type="compositionally biased region" description="Low complexity" evidence="3">
    <location>
        <begin position="459"/>
        <end position="470"/>
    </location>
</feature>
<feature type="compositionally biased region" description="Low complexity" evidence="3">
    <location>
        <begin position="499"/>
        <end position="527"/>
    </location>
</feature>
<feature type="compositionally biased region" description="Low complexity" evidence="3">
    <location>
        <begin position="562"/>
        <end position="605"/>
    </location>
</feature>
<feature type="compositionally biased region" description="Low complexity" evidence="3">
    <location>
        <begin position="662"/>
        <end position="678"/>
    </location>
</feature>
<feature type="compositionally biased region" description="Low complexity" evidence="3">
    <location>
        <begin position="699"/>
        <end position="720"/>
    </location>
</feature>
<feature type="active site" description="Proton acceptor" evidence="1 2">
    <location>
        <position position="192"/>
    </location>
</feature>
<feature type="binding site" evidence="1">
    <location>
        <begin position="41"/>
        <end position="49"/>
    </location>
    <ligand>
        <name>ATP</name>
        <dbReference type="ChEBI" id="CHEBI:30616"/>
    </ligand>
</feature>
<feature type="binding site" evidence="1">
    <location>
        <position position="62"/>
    </location>
    <ligand>
        <name>ATP</name>
        <dbReference type="ChEBI" id="CHEBI:30616"/>
    </ligand>
</feature>
<protein>
    <recommendedName>
        <fullName>Probable serine/threonine-protein kinase DDB_G0271402</fullName>
        <ecNumber>2.7.11.1</ecNumber>
    </recommendedName>
</protein>
<sequence length="765" mass="84389">MISMDSTPTLNFETSDNLDGLPDGSNAFKINIDDLEFGQEIGKGAYGKIFKGEYFGTPVAIKEISLQPNDVKYKDLTKFIQREVAMLRFSHPNLVQFIGVSERGSSLYIVTEFVQGGDLAYYLFRNKFDDTPEQYIHRKVNVGSSSTPDLSDPTVHNGEKLVQLAWPLRIKIAYDVACAMAYLHSRNVIHRDLKSTNLLVGDNWRIKVCDMGFARTAQVGGGSRAKRTMTICGTTNCMAPEVVLGQDYNEACDVFSYGIVLSEIITRMDTTNNLRPSSLKYGLDVDVLLPLVPKDCPPPFLKLVLDCTEYDPDNRPTFKEITERLKSLTKKLSTPHILPPLRVLAQSPLTSPIQSPISTKNQFNPNLFKSIVHNNHNHSSSSNNSSGYNNNSNHNINITVNSININSSNINNNNNNNNINNNNNNNNNISFSGRQEELMSPISMGDESDLDSDDEDDSYTSSASSSRCNSRNGKIINGGKQMGYIIKHHYSSDLESSPNGNNINNNNNNNNNNNNNNNNNNNNNNNSGNNGICINSLSLGVSSSPIQIGLSSKSPTPPSMSPPTSVKSYHPNNNNNNININNTNTNINNNKISSSPPVKNSPKSNRFSNGSLKQQFQQYQQQQQQLFLNINEDDKELEELSKSIDDTFRLHFSPLNISPTQNNNNNNNNSNNNNGNVNHNHHHLNQHSHINGHLISPTIISSSSTTSSSTSTPSLVSLTSSRDHHHHHISVTSSPTNIKPLSSSIASNSSVFTPLGSGLTRTVQS</sequence>
<dbReference type="EC" id="2.7.11.1"/>
<dbReference type="EMBL" id="AAFI02000006">
    <property type="protein sequence ID" value="EAL71831.1"/>
    <property type="molecule type" value="Genomic_DNA"/>
</dbReference>
<dbReference type="RefSeq" id="XP_645712.1">
    <property type="nucleotide sequence ID" value="XM_640620.1"/>
</dbReference>
<dbReference type="SMR" id="Q55BA0"/>
<dbReference type="FunCoup" id="Q55BA0">
    <property type="interactions" value="647"/>
</dbReference>
<dbReference type="STRING" id="44689.Q55BA0"/>
<dbReference type="GlyGen" id="Q55BA0">
    <property type="glycosylation" value="2 sites"/>
</dbReference>
<dbReference type="PaxDb" id="44689-DDB0229866"/>
<dbReference type="EnsemblProtists" id="EAL71831">
    <property type="protein sequence ID" value="EAL71831"/>
    <property type="gene ID" value="DDB_G0271402"/>
</dbReference>
<dbReference type="GeneID" id="8617905"/>
<dbReference type="KEGG" id="ddi:DDB_G0271402"/>
<dbReference type="dictyBase" id="DDB_G0271402"/>
<dbReference type="VEuPathDB" id="AmoebaDB:DDB_G0271402"/>
<dbReference type="eggNOG" id="KOG0192">
    <property type="taxonomic scope" value="Eukaryota"/>
</dbReference>
<dbReference type="HOGENOM" id="CLU_365025_0_0_1"/>
<dbReference type="InParanoid" id="Q55BA0"/>
<dbReference type="OMA" id="NCMAPEV"/>
<dbReference type="Reactome" id="R-DDI-2029482">
    <property type="pathway name" value="Regulation of actin dynamics for phagocytic cup formation"/>
</dbReference>
<dbReference type="Reactome" id="R-DDI-399954">
    <property type="pathway name" value="Sema3A PAK dependent Axon repulsion"/>
</dbReference>
<dbReference type="Reactome" id="R-DDI-5627123">
    <property type="pathway name" value="RHO GTPases activate PAKs"/>
</dbReference>
<dbReference type="PRO" id="PR:Q55BA0"/>
<dbReference type="Proteomes" id="UP000002195">
    <property type="component" value="Chromosome 2"/>
</dbReference>
<dbReference type="GO" id="GO:0005524">
    <property type="term" value="F:ATP binding"/>
    <property type="evidence" value="ECO:0007669"/>
    <property type="project" value="UniProtKB-KW"/>
</dbReference>
<dbReference type="GO" id="GO:0106310">
    <property type="term" value="F:protein serine kinase activity"/>
    <property type="evidence" value="ECO:0007669"/>
    <property type="project" value="RHEA"/>
</dbReference>
<dbReference type="GO" id="GO:0004674">
    <property type="term" value="F:protein serine/threonine kinase activity"/>
    <property type="evidence" value="ECO:0007669"/>
    <property type="project" value="UniProtKB-KW"/>
</dbReference>
<dbReference type="CDD" id="cd13999">
    <property type="entry name" value="STKc_MAP3K-like"/>
    <property type="match status" value="1"/>
</dbReference>
<dbReference type="Gene3D" id="3.30.200.20">
    <property type="entry name" value="Phosphorylase Kinase, domain 1"/>
    <property type="match status" value="1"/>
</dbReference>
<dbReference type="Gene3D" id="1.10.510.10">
    <property type="entry name" value="Transferase(Phosphotransferase) domain 1"/>
    <property type="match status" value="1"/>
</dbReference>
<dbReference type="InterPro" id="IPR050940">
    <property type="entry name" value="Actin_reg-Ser/Thr_kinase"/>
</dbReference>
<dbReference type="InterPro" id="IPR011009">
    <property type="entry name" value="Kinase-like_dom_sf"/>
</dbReference>
<dbReference type="InterPro" id="IPR000719">
    <property type="entry name" value="Prot_kinase_dom"/>
</dbReference>
<dbReference type="InterPro" id="IPR017441">
    <property type="entry name" value="Protein_kinase_ATP_BS"/>
</dbReference>
<dbReference type="InterPro" id="IPR001245">
    <property type="entry name" value="Ser-Thr/Tyr_kinase_cat_dom"/>
</dbReference>
<dbReference type="InterPro" id="IPR008271">
    <property type="entry name" value="Ser/Thr_kinase_AS"/>
</dbReference>
<dbReference type="PANTHER" id="PTHR46485:SF5">
    <property type="entry name" value="CENTER DIVIDER, ISOFORM A"/>
    <property type="match status" value="1"/>
</dbReference>
<dbReference type="PANTHER" id="PTHR46485">
    <property type="entry name" value="LIM DOMAIN KINASE 1"/>
    <property type="match status" value="1"/>
</dbReference>
<dbReference type="Pfam" id="PF07714">
    <property type="entry name" value="PK_Tyr_Ser-Thr"/>
    <property type="match status" value="1"/>
</dbReference>
<dbReference type="PRINTS" id="PR00109">
    <property type="entry name" value="TYRKINASE"/>
</dbReference>
<dbReference type="SMART" id="SM00220">
    <property type="entry name" value="S_TKc"/>
    <property type="match status" value="1"/>
</dbReference>
<dbReference type="SUPFAM" id="SSF56112">
    <property type="entry name" value="Protein kinase-like (PK-like)"/>
    <property type="match status" value="1"/>
</dbReference>
<dbReference type="PROSITE" id="PS00107">
    <property type="entry name" value="PROTEIN_KINASE_ATP"/>
    <property type="match status" value="1"/>
</dbReference>
<dbReference type="PROSITE" id="PS50011">
    <property type="entry name" value="PROTEIN_KINASE_DOM"/>
    <property type="match status" value="1"/>
</dbReference>
<dbReference type="PROSITE" id="PS00108">
    <property type="entry name" value="PROTEIN_KINASE_ST"/>
    <property type="match status" value="1"/>
</dbReference>
<keyword id="KW-0067">ATP-binding</keyword>
<keyword id="KW-0418">Kinase</keyword>
<keyword id="KW-0547">Nucleotide-binding</keyword>
<keyword id="KW-1185">Reference proteome</keyword>
<keyword id="KW-0723">Serine/threonine-protein kinase</keyword>
<keyword id="KW-0808">Transferase</keyword>
<name>Y9866_DICDI</name>
<proteinExistence type="inferred from homology"/>
<evidence type="ECO:0000255" key="1">
    <source>
        <dbReference type="PROSITE-ProRule" id="PRU00159"/>
    </source>
</evidence>
<evidence type="ECO:0000255" key="2">
    <source>
        <dbReference type="PROSITE-ProRule" id="PRU10027"/>
    </source>
</evidence>
<evidence type="ECO:0000256" key="3">
    <source>
        <dbReference type="SAM" id="MobiDB-lite"/>
    </source>
</evidence>
<evidence type="ECO:0000305" key="4"/>
<gene>
    <name type="ORF">DDB_G0271402</name>
</gene>
<organism>
    <name type="scientific">Dictyostelium discoideum</name>
    <name type="common">Social amoeba</name>
    <dbReference type="NCBI Taxonomy" id="44689"/>
    <lineage>
        <taxon>Eukaryota</taxon>
        <taxon>Amoebozoa</taxon>
        <taxon>Evosea</taxon>
        <taxon>Eumycetozoa</taxon>
        <taxon>Dictyostelia</taxon>
        <taxon>Dictyosteliales</taxon>
        <taxon>Dictyosteliaceae</taxon>
        <taxon>Dictyostelium</taxon>
    </lineage>
</organism>